<organism>
    <name type="scientific">Rattus norvegicus</name>
    <name type="common">Rat</name>
    <dbReference type="NCBI Taxonomy" id="10116"/>
    <lineage>
        <taxon>Eukaryota</taxon>
        <taxon>Metazoa</taxon>
        <taxon>Chordata</taxon>
        <taxon>Craniata</taxon>
        <taxon>Vertebrata</taxon>
        <taxon>Euteleostomi</taxon>
        <taxon>Mammalia</taxon>
        <taxon>Eutheria</taxon>
        <taxon>Euarchontoglires</taxon>
        <taxon>Glires</taxon>
        <taxon>Rodentia</taxon>
        <taxon>Myomorpha</taxon>
        <taxon>Muroidea</taxon>
        <taxon>Muridae</taxon>
        <taxon>Murinae</taxon>
        <taxon>Rattus</taxon>
    </lineage>
</organism>
<name>ORC4_RAT</name>
<reference key="1">
    <citation type="journal article" date="2004" name="Genome Res.">
        <title>The status, quality, and expansion of the NIH full-length cDNA project: the Mammalian Gene Collection (MGC).</title>
        <authorList>
            <consortium name="The MGC Project Team"/>
        </authorList>
    </citation>
    <scope>NUCLEOTIDE SEQUENCE [LARGE SCALE MRNA]</scope>
    <source>
        <tissue>Prostate</tissue>
    </source>
</reference>
<gene>
    <name type="primary">Orc4</name>
    <name type="synonym">Orc4l</name>
</gene>
<protein>
    <recommendedName>
        <fullName>Origin recognition complex subunit 4</fullName>
    </recommendedName>
</protein>
<sequence>MSNRKSKNNIHAECLSQVQRILRERFCHHTPHSNLFGVQVQYKHLIELLKRTAIYGESNSLLIVGPRGSGKTTLLNHALKELMQIGDMSENVLQVHLNGLLQTNDKIALKEITRQLNLENVVGDKVFGSFAENLSFLLEALQKGNRTSSCPVIFILDEFDLFAHQKNQTLLYNLFDISQSAQTPIAVIGLTCRLDILELLEKRVKSRFSHRQIHLMNSFDFPQYLKIFKEQLSLPAEFPDKIFAEKWNENAHCLSEDSTVLEVLQKHFNVNKNLQSLHMLLMLALNRVTVTHPFMTSADLMEAQHLCSLDAKASIVHGLSVLEICLIIAMKHLNDIYEEEPFNFQMVYNEFQKFIQRKAHSVYNFEKPVVMKAFEHLQQLELIKPMERTSVNSQREYQLVKLLLDNTQIMNALQKYSNCPTDVRQWATSSLSWL</sequence>
<comment type="function">
    <text evidence="1">Component of the origin recognition complex (ORC) that binds origins of replication. DNA-binding is ATP-dependent. The specific DNA sequences that define origins of replication have not been identified yet. ORC is required to assemble the pre-replication complex necessary to initiate DNA replication. Binds histone H3 and H4 trimethylation marks H3K9me3, H3K27me3 and H4K20me3 (By similarity).</text>
</comment>
<comment type="subunit">
    <text evidence="2 3">Component of ORC, a complex composed of at least 6 subunits: ORC1, ORC2, ORC3, ORC4, ORC5 and ORC6. ORC is regulated in a cell-cycle dependent manner. It is sequentially assembled at the exit from anaphase of mitosis and disassembled as cells enter S phase (By similarity). Interacts with DBF4 (By similarity). Interacts with POLQ (By similarity).</text>
</comment>
<comment type="subcellular location">
    <subcellularLocation>
        <location evidence="1">Nucleus</location>
    </subcellularLocation>
</comment>
<comment type="similarity">
    <text evidence="5">Belongs to the ORC4 family.</text>
</comment>
<feature type="chain" id="PRO_0000328611" description="Origin recognition complex subunit 4">
    <location>
        <begin position="1"/>
        <end position="434"/>
    </location>
</feature>
<feature type="binding site" evidence="4">
    <location>
        <begin position="65"/>
        <end position="72"/>
    </location>
    <ligand>
        <name>ATP</name>
        <dbReference type="ChEBI" id="CHEBI:30616"/>
    </ligand>
</feature>
<feature type="modified residue" description="N6-methyllysine" evidence="2">
    <location>
        <position position="7"/>
    </location>
</feature>
<evidence type="ECO:0000250" key="1"/>
<evidence type="ECO:0000250" key="2">
    <source>
        <dbReference type="UniProtKB" id="O43929"/>
    </source>
</evidence>
<evidence type="ECO:0000250" key="3">
    <source>
        <dbReference type="UniProtKB" id="O88708"/>
    </source>
</evidence>
<evidence type="ECO:0000255" key="4"/>
<evidence type="ECO:0000305" key="5"/>
<dbReference type="EMBL" id="BC060516">
    <property type="protein sequence ID" value="AAH60516.1"/>
    <property type="molecule type" value="mRNA"/>
</dbReference>
<dbReference type="RefSeq" id="NP_001416762.1">
    <property type="nucleotide sequence ID" value="NM_001429833.1"/>
</dbReference>
<dbReference type="RefSeq" id="NP_954523.1">
    <property type="nucleotide sequence ID" value="NM_199092.2"/>
</dbReference>
<dbReference type="SMR" id="Q6P9Z8"/>
<dbReference type="FunCoup" id="Q6P9Z8">
    <property type="interactions" value="3465"/>
</dbReference>
<dbReference type="STRING" id="10116.ENSRNOP00000006937"/>
<dbReference type="PhosphoSitePlus" id="Q6P9Z8"/>
<dbReference type="PaxDb" id="10116-ENSRNOP00000006937"/>
<dbReference type="GeneID" id="295596"/>
<dbReference type="KEGG" id="rno:295596"/>
<dbReference type="UCSC" id="RGD:735212">
    <property type="organism name" value="rat"/>
</dbReference>
<dbReference type="AGR" id="RGD:735212"/>
<dbReference type="CTD" id="5000"/>
<dbReference type="RGD" id="735212">
    <property type="gene designation" value="Orc4"/>
</dbReference>
<dbReference type="VEuPathDB" id="HostDB:ENSRNOG00000005021"/>
<dbReference type="eggNOG" id="KOG2228">
    <property type="taxonomic scope" value="Eukaryota"/>
</dbReference>
<dbReference type="HOGENOM" id="CLU_007115_0_1_1"/>
<dbReference type="InParanoid" id="Q6P9Z8"/>
<dbReference type="OrthoDB" id="343623at2759"/>
<dbReference type="PhylomeDB" id="Q6P9Z8"/>
<dbReference type="TreeFam" id="TF101094"/>
<dbReference type="Reactome" id="R-RNO-176187">
    <property type="pathway name" value="Activation of ATR in response to replication stress"/>
</dbReference>
<dbReference type="Reactome" id="R-RNO-68616">
    <property type="pathway name" value="Assembly of the ORC complex at the origin of replication"/>
</dbReference>
<dbReference type="Reactome" id="R-RNO-68689">
    <property type="pathway name" value="CDC6 association with the ORC:origin complex"/>
</dbReference>
<dbReference type="Reactome" id="R-RNO-68949">
    <property type="pathway name" value="Orc1 removal from chromatin"/>
</dbReference>
<dbReference type="Reactome" id="R-RNO-68962">
    <property type="pathway name" value="Activation of the pre-replicative complex"/>
</dbReference>
<dbReference type="PRO" id="PR:Q6P9Z8"/>
<dbReference type="Proteomes" id="UP000002494">
    <property type="component" value="Chromosome 3"/>
</dbReference>
<dbReference type="Bgee" id="ENSRNOG00000005021">
    <property type="expression patterns" value="Expressed in testis and 19 other cell types or tissues"/>
</dbReference>
<dbReference type="GO" id="GO:0000781">
    <property type="term" value="C:chromosome, telomeric region"/>
    <property type="evidence" value="ECO:0000266"/>
    <property type="project" value="RGD"/>
</dbReference>
<dbReference type="GO" id="GO:0005737">
    <property type="term" value="C:cytoplasm"/>
    <property type="evidence" value="ECO:0000266"/>
    <property type="project" value="RGD"/>
</dbReference>
<dbReference type="GO" id="GO:0005664">
    <property type="term" value="C:nuclear origin of replication recognition complex"/>
    <property type="evidence" value="ECO:0000250"/>
    <property type="project" value="UniProtKB"/>
</dbReference>
<dbReference type="GO" id="GO:0005634">
    <property type="term" value="C:nucleus"/>
    <property type="evidence" value="ECO:0000250"/>
    <property type="project" value="UniProtKB"/>
</dbReference>
<dbReference type="GO" id="GO:0000808">
    <property type="term" value="C:origin recognition complex"/>
    <property type="evidence" value="ECO:0000266"/>
    <property type="project" value="RGD"/>
</dbReference>
<dbReference type="GO" id="GO:0005524">
    <property type="term" value="F:ATP binding"/>
    <property type="evidence" value="ECO:0007669"/>
    <property type="project" value="UniProtKB-KW"/>
</dbReference>
<dbReference type="GO" id="GO:0016887">
    <property type="term" value="F:ATP hydrolysis activity"/>
    <property type="evidence" value="ECO:0007669"/>
    <property type="project" value="InterPro"/>
</dbReference>
<dbReference type="GO" id="GO:0003688">
    <property type="term" value="F:DNA replication origin binding"/>
    <property type="evidence" value="ECO:0000250"/>
    <property type="project" value="UniProtKB"/>
</dbReference>
<dbReference type="GO" id="GO:0000166">
    <property type="term" value="F:nucleotide binding"/>
    <property type="evidence" value="ECO:0000250"/>
    <property type="project" value="UniProtKB"/>
</dbReference>
<dbReference type="GO" id="GO:0006260">
    <property type="term" value="P:DNA replication"/>
    <property type="evidence" value="ECO:0000266"/>
    <property type="project" value="RGD"/>
</dbReference>
<dbReference type="GO" id="GO:0006270">
    <property type="term" value="P:DNA replication initiation"/>
    <property type="evidence" value="ECO:0000250"/>
    <property type="project" value="UniProtKB"/>
</dbReference>
<dbReference type="GO" id="GO:0040038">
    <property type="term" value="P:polar body extrusion after meiotic divisions"/>
    <property type="evidence" value="ECO:0000266"/>
    <property type="project" value="RGD"/>
</dbReference>
<dbReference type="GO" id="GO:0051258">
    <property type="term" value="P:protein polymerization"/>
    <property type="evidence" value="ECO:0000266"/>
    <property type="project" value="RGD"/>
</dbReference>
<dbReference type="CDD" id="cd00009">
    <property type="entry name" value="AAA"/>
    <property type="match status" value="1"/>
</dbReference>
<dbReference type="FunFam" id="3.40.50.300:FF:000649">
    <property type="entry name" value="Origin recognition complex subunit 4"/>
    <property type="match status" value="1"/>
</dbReference>
<dbReference type="Gene3D" id="3.40.50.300">
    <property type="entry name" value="P-loop containing nucleotide triphosphate hydrolases"/>
    <property type="match status" value="1"/>
</dbReference>
<dbReference type="InterPro" id="IPR003593">
    <property type="entry name" value="AAA+_ATPase"/>
</dbReference>
<dbReference type="InterPro" id="IPR003959">
    <property type="entry name" value="ATPase_AAA_core"/>
</dbReference>
<dbReference type="InterPro" id="IPR016527">
    <property type="entry name" value="ORC4"/>
</dbReference>
<dbReference type="InterPro" id="IPR032705">
    <property type="entry name" value="ORC4_C"/>
</dbReference>
<dbReference type="InterPro" id="IPR027417">
    <property type="entry name" value="P-loop_NTPase"/>
</dbReference>
<dbReference type="PANTHER" id="PTHR12087">
    <property type="entry name" value="ORIGIN RECOGNITION COMPLEX SUBUNIT 4"/>
    <property type="match status" value="1"/>
</dbReference>
<dbReference type="PANTHER" id="PTHR12087:SF0">
    <property type="entry name" value="ORIGIN RECOGNITION COMPLEX SUBUNIT 4"/>
    <property type="match status" value="1"/>
</dbReference>
<dbReference type="Pfam" id="PF00004">
    <property type="entry name" value="AAA"/>
    <property type="match status" value="1"/>
</dbReference>
<dbReference type="Pfam" id="PF14629">
    <property type="entry name" value="ORC4_C"/>
    <property type="match status" value="1"/>
</dbReference>
<dbReference type="PIRSF" id="PIRSF007858">
    <property type="entry name" value="ORC4"/>
    <property type="match status" value="1"/>
</dbReference>
<dbReference type="SMART" id="SM00382">
    <property type="entry name" value="AAA"/>
    <property type="match status" value="1"/>
</dbReference>
<dbReference type="SUPFAM" id="SSF52540">
    <property type="entry name" value="P-loop containing nucleoside triphosphate hydrolases"/>
    <property type="match status" value="1"/>
</dbReference>
<accession>Q6P9Z8</accession>
<proteinExistence type="evidence at transcript level"/>
<keyword id="KW-0067">ATP-binding</keyword>
<keyword id="KW-0235">DNA replication</keyword>
<keyword id="KW-0238">DNA-binding</keyword>
<keyword id="KW-0488">Methylation</keyword>
<keyword id="KW-0547">Nucleotide-binding</keyword>
<keyword id="KW-0539">Nucleus</keyword>
<keyword id="KW-1185">Reference proteome</keyword>